<name>FLUC_ANAD2</name>
<evidence type="ECO:0000255" key="1">
    <source>
        <dbReference type="HAMAP-Rule" id="MF_00454"/>
    </source>
</evidence>
<gene>
    <name evidence="1" type="primary">fluC</name>
    <name evidence="1" type="synonym">crcB</name>
    <name type="ordered locus">A2cp1_3635</name>
</gene>
<dbReference type="EMBL" id="CP001359">
    <property type="protein sequence ID" value="ACL66965.1"/>
    <property type="molecule type" value="Genomic_DNA"/>
</dbReference>
<dbReference type="RefSeq" id="WP_015934740.1">
    <property type="nucleotide sequence ID" value="NC_011891.1"/>
</dbReference>
<dbReference type="SMR" id="B8J670"/>
<dbReference type="KEGG" id="acp:A2cp1_3635"/>
<dbReference type="HOGENOM" id="CLU_114342_1_4_7"/>
<dbReference type="Proteomes" id="UP000007089">
    <property type="component" value="Chromosome"/>
</dbReference>
<dbReference type="GO" id="GO:0005886">
    <property type="term" value="C:plasma membrane"/>
    <property type="evidence" value="ECO:0007669"/>
    <property type="project" value="UniProtKB-SubCell"/>
</dbReference>
<dbReference type="GO" id="GO:0062054">
    <property type="term" value="F:fluoride channel activity"/>
    <property type="evidence" value="ECO:0007669"/>
    <property type="project" value="UniProtKB-UniRule"/>
</dbReference>
<dbReference type="GO" id="GO:0046872">
    <property type="term" value="F:metal ion binding"/>
    <property type="evidence" value="ECO:0007669"/>
    <property type="project" value="UniProtKB-KW"/>
</dbReference>
<dbReference type="GO" id="GO:0140114">
    <property type="term" value="P:cellular detoxification of fluoride"/>
    <property type="evidence" value="ECO:0007669"/>
    <property type="project" value="UniProtKB-UniRule"/>
</dbReference>
<dbReference type="HAMAP" id="MF_00454">
    <property type="entry name" value="FluC"/>
    <property type="match status" value="1"/>
</dbReference>
<dbReference type="InterPro" id="IPR003691">
    <property type="entry name" value="FluC"/>
</dbReference>
<dbReference type="NCBIfam" id="TIGR00494">
    <property type="entry name" value="crcB"/>
    <property type="match status" value="1"/>
</dbReference>
<dbReference type="PANTHER" id="PTHR28259">
    <property type="entry name" value="FLUORIDE EXPORT PROTEIN 1-RELATED"/>
    <property type="match status" value="1"/>
</dbReference>
<dbReference type="PANTHER" id="PTHR28259:SF1">
    <property type="entry name" value="FLUORIDE EXPORT PROTEIN 1-RELATED"/>
    <property type="match status" value="1"/>
</dbReference>
<dbReference type="Pfam" id="PF02537">
    <property type="entry name" value="CRCB"/>
    <property type="match status" value="1"/>
</dbReference>
<protein>
    <recommendedName>
        <fullName evidence="1">Fluoride-specific ion channel FluC</fullName>
    </recommendedName>
</protein>
<reference key="1">
    <citation type="submission" date="2009-01" db="EMBL/GenBank/DDBJ databases">
        <title>Complete sequence of Anaeromyxobacter dehalogenans 2CP-1.</title>
        <authorList>
            <person name="Lucas S."/>
            <person name="Copeland A."/>
            <person name="Lapidus A."/>
            <person name="Glavina del Rio T."/>
            <person name="Dalin E."/>
            <person name="Tice H."/>
            <person name="Bruce D."/>
            <person name="Goodwin L."/>
            <person name="Pitluck S."/>
            <person name="Saunders E."/>
            <person name="Brettin T."/>
            <person name="Detter J.C."/>
            <person name="Han C."/>
            <person name="Larimer F."/>
            <person name="Land M."/>
            <person name="Hauser L."/>
            <person name="Kyrpides N."/>
            <person name="Ovchinnikova G."/>
            <person name="Beliaev A.S."/>
            <person name="Richardson P."/>
        </authorList>
    </citation>
    <scope>NUCLEOTIDE SEQUENCE [LARGE SCALE GENOMIC DNA]</scope>
    <source>
        <strain>2CP-1 / ATCC BAA-258</strain>
    </source>
</reference>
<organism>
    <name type="scientific">Anaeromyxobacter dehalogenans (strain 2CP-1 / ATCC BAA-258)</name>
    <dbReference type="NCBI Taxonomy" id="455488"/>
    <lineage>
        <taxon>Bacteria</taxon>
        <taxon>Pseudomonadati</taxon>
        <taxon>Myxococcota</taxon>
        <taxon>Myxococcia</taxon>
        <taxon>Myxococcales</taxon>
        <taxon>Cystobacterineae</taxon>
        <taxon>Anaeromyxobacteraceae</taxon>
        <taxon>Anaeromyxobacter</taxon>
    </lineage>
</organism>
<sequence length="126" mass="13002">MARLLLVCLGGALGSGARYLTSAWALRAFGPDFPRGTLLVNVSGSFLLAGIMTASLQSEAVPPDLRLFLAAGVMGGFTTYSSFNYETLALVEQGRLAAAAAYLLATVLGCLAAAFAATLLVRWLAG</sequence>
<proteinExistence type="inferred from homology"/>
<keyword id="KW-0997">Cell inner membrane</keyword>
<keyword id="KW-1003">Cell membrane</keyword>
<keyword id="KW-0407">Ion channel</keyword>
<keyword id="KW-0406">Ion transport</keyword>
<keyword id="KW-0472">Membrane</keyword>
<keyword id="KW-0479">Metal-binding</keyword>
<keyword id="KW-0915">Sodium</keyword>
<keyword id="KW-0812">Transmembrane</keyword>
<keyword id="KW-1133">Transmembrane helix</keyword>
<keyword id="KW-0813">Transport</keyword>
<feature type="chain" id="PRO_1000135313" description="Fluoride-specific ion channel FluC">
    <location>
        <begin position="1"/>
        <end position="126"/>
    </location>
</feature>
<feature type="transmembrane region" description="Helical" evidence="1">
    <location>
        <begin position="4"/>
        <end position="24"/>
    </location>
</feature>
<feature type="transmembrane region" description="Helical" evidence="1">
    <location>
        <begin position="36"/>
        <end position="56"/>
    </location>
</feature>
<feature type="transmembrane region" description="Helical" evidence="1">
    <location>
        <begin position="67"/>
        <end position="85"/>
    </location>
</feature>
<feature type="transmembrane region" description="Helical" evidence="1">
    <location>
        <begin position="101"/>
        <end position="121"/>
    </location>
</feature>
<feature type="binding site" evidence="1">
    <location>
        <position position="75"/>
    </location>
    <ligand>
        <name>Na(+)</name>
        <dbReference type="ChEBI" id="CHEBI:29101"/>
        <note>structural</note>
    </ligand>
</feature>
<feature type="binding site" evidence="1">
    <location>
        <position position="78"/>
    </location>
    <ligand>
        <name>Na(+)</name>
        <dbReference type="ChEBI" id="CHEBI:29101"/>
        <note>structural</note>
    </ligand>
</feature>
<accession>B8J670</accession>
<comment type="function">
    <text evidence="1">Fluoride-specific ion channel. Important for reducing fluoride concentration in the cell, thus reducing its toxicity.</text>
</comment>
<comment type="catalytic activity">
    <reaction evidence="1">
        <text>fluoride(in) = fluoride(out)</text>
        <dbReference type="Rhea" id="RHEA:76159"/>
        <dbReference type="ChEBI" id="CHEBI:17051"/>
    </reaction>
    <physiologicalReaction direction="left-to-right" evidence="1">
        <dbReference type="Rhea" id="RHEA:76160"/>
    </physiologicalReaction>
</comment>
<comment type="activity regulation">
    <text evidence="1">Na(+) is not transported, but it plays an essential structural role and its presence is essential for fluoride channel function.</text>
</comment>
<comment type="subcellular location">
    <subcellularLocation>
        <location evidence="1">Cell inner membrane</location>
        <topology evidence="1">Multi-pass membrane protein</topology>
    </subcellularLocation>
</comment>
<comment type="similarity">
    <text evidence="1">Belongs to the fluoride channel Fluc/FEX (TC 1.A.43) family.</text>
</comment>